<keyword id="KW-1005">Bacterial flagellum biogenesis</keyword>
<keyword id="KW-0963">Cytoplasm</keyword>
<keyword id="KW-1185">Reference proteome</keyword>
<keyword id="KW-0678">Repressor</keyword>
<keyword id="KW-0694">RNA-binding</keyword>
<keyword id="KW-0810">Translation regulation</keyword>
<name>CSRA_TREPA</name>
<sequence length="73" mass="8336">MLILSRKTNQKIFIGDSIELTIIEIRGDQVKVGVEAPRSVKIFRQEVYEEIQRENRAASDSPWSPNSLPQLPV</sequence>
<gene>
    <name evidence="1" type="primary">csrA</name>
    <name type="ordered locus">TP_0657</name>
</gene>
<accession>O83663</accession>
<organism>
    <name type="scientific">Treponema pallidum (strain Nichols)</name>
    <dbReference type="NCBI Taxonomy" id="243276"/>
    <lineage>
        <taxon>Bacteria</taxon>
        <taxon>Pseudomonadati</taxon>
        <taxon>Spirochaetota</taxon>
        <taxon>Spirochaetia</taxon>
        <taxon>Spirochaetales</taxon>
        <taxon>Treponemataceae</taxon>
        <taxon>Treponema</taxon>
    </lineage>
</organism>
<comment type="function">
    <text evidence="1">A translational regulator that binds mRNA to regulate translation initiation and/or mRNA stability. Usually binds in the 5'-UTR at or near the Shine-Dalgarno sequence preventing ribosome-binding, thus repressing translation. Its main target seems to be the major flagellin gene, while its function is anatagonized by FliW.</text>
</comment>
<comment type="subunit">
    <text evidence="1">Homodimer; the beta-strands of each monomer intercalate to form a hydrophobic core, while the alpha-helices form wings that extend away from the core.</text>
</comment>
<comment type="subcellular location">
    <subcellularLocation>
        <location evidence="1">Cytoplasm</location>
    </subcellularLocation>
</comment>
<comment type="similarity">
    <text evidence="1">Belongs to the CsrA/RsmA family.</text>
</comment>
<reference key="1">
    <citation type="journal article" date="1998" name="Science">
        <title>Complete genome sequence of Treponema pallidum, the syphilis spirochete.</title>
        <authorList>
            <person name="Fraser C.M."/>
            <person name="Norris S.J."/>
            <person name="Weinstock G.M."/>
            <person name="White O."/>
            <person name="Sutton G.G."/>
            <person name="Dodson R.J."/>
            <person name="Gwinn M.L."/>
            <person name="Hickey E.K."/>
            <person name="Clayton R.A."/>
            <person name="Ketchum K.A."/>
            <person name="Sodergren E."/>
            <person name="Hardham J.M."/>
            <person name="McLeod M.P."/>
            <person name="Salzberg S.L."/>
            <person name="Peterson J.D."/>
            <person name="Khalak H.G."/>
            <person name="Richardson D.L."/>
            <person name="Howell J.K."/>
            <person name="Chidambaram M."/>
            <person name="Utterback T.R."/>
            <person name="McDonald L.A."/>
            <person name="Artiach P."/>
            <person name="Bowman C."/>
            <person name="Cotton M.D."/>
            <person name="Fujii C."/>
            <person name="Garland S.A."/>
            <person name="Hatch B."/>
            <person name="Horst K."/>
            <person name="Roberts K.M."/>
            <person name="Sandusky M."/>
            <person name="Weidman J.F."/>
            <person name="Smith H.O."/>
            <person name="Venter J.C."/>
        </authorList>
    </citation>
    <scope>NUCLEOTIDE SEQUENCE [LARGE SCALE GENOMIC DNA]</scope>
    <source>
        <strain>Nichols</strain>
    </source>
</reference>
<proteinExistence type="inferred from homology"/>
<dbReference type="EMBL" id="AE000520">
    <property type="protein sequence ID" value="AAC65631.1"/>
    <property type="molecule type" value="Genomic_DNA"/>
</dbReference>
<dbReference type="PIR" id="B71297">
    <property type="entry name" value="B71297"/>
</dbReference>
<dbReference type="RefSeq" id="WP_010882102.1">
    <property type="nucleotide sequence ID" value="NC_021490.2"/>
</dbReference>
<dbReference type="SMR" id="O83663"/>
<dbReference type="IntAct" id="O83663">
    <property type="interactions" value="4"/>
</dbReference>
<dbReference type="STRING" id="243276.TP_0657"/>
<dbReference type="EnsemblBacteria" id="AAC65631">
    <property type="protein sequence ID" value="AAC65631"/>
    <property type="gene ID" value="TP_0657"/>
</dbReference>
<dbReference type="GeneID" id="93876424"/>
<dbReference type="KEGG" id="tpa:TP_0657"/>
<dbReference type="KEGG" id="tpw:TPANIC_0657"/>
<dbReference type="eggNOG" id="COG1551">
    <property type="taxonomic scope" value="Bacteria"/>
</dbReference>
<dbReference type="HOGENOM" id="CLU_164837_0_0_12"/>
<dbReference type="OrthoDB" id="9809061at2"/>
<dbReference type="Proteomes" id="UP000000811">
    <property type="component" value="Chromosome"/>
</dbReference>
<dbReference type="GO" id="GO:0005829">
    <property type="term" value="C:cytosol"/>
    <property type="evidence" value="ECO:0007669"/>
    <property type="project" value="TreeGrafter"/>
</dbReference>
<dbReference type="GO" id="GO:0048027">
    <property type="term" value="F:mRNA 5'-UTR binding"/>
    <property type="evidence" value="ECO:0007669"/>
    <property type="project" value="UniProtKB-UniRule"/>
</dbReference>
<dbReference type="GO" id="GO:0044781">
    <property type="term" value="P:bacterial-type flagellum organization"/>
    <property type="evidence" value="ECO:0007669"/>
    <property type="project" value="UniProtKB-KW"/>
</dbReference>
<dbReference type="GO" id="GO:0006402">
    <property type="term" value="P:mRNA catabolic process"/>
    <property type="evidence" value="ECO:0007669"/>
    <property type="project" value="InterPro"/>
</dbReference>
<dbReference type="GO" id="GO:0045947">
    <property type="term" value="P:negative regulation of translational initiation"/>
    <property type="evidence" value="ECO:0007669"/>
    <property type="project" value="UniProtKB-UniRule"/>
</dbReference>
<dbReference type="GO" id="GO:1902208">
    <property type="term" value="P:regulation of bacterial-type flagellum assembly"/>
    <property type="evidence" value="ECO:0007669"/>
    <property type="project" value="UniProtKB-UniRule"/>
</dbReference>
<dbReference type="GO" id="GO:0006109">
    <property type="term" value="P:regulation of carbohydrate metabolic process"/>
    <property type="evidence" value="ECO:0007669"/>
    <property type="project" value="InterPro"/>
</dbReference>
<dbReference type="FunFam" id="2.60.40.4380:FF:000002">
    <property type="entry name" value="Translational regulator CsrA"/>
    <property type="match status" value="1"/>
</dbReference>
<dbReference type="Gene3D" id="2.60.40.4380">
    <property type="entry name" value="Translational regulator CsrA"/>
    <property type="match status" value="1"/>
</dbReference>
<dbReference type="HAMAP" id="MF_00167">
    <property type="entry name" value="CsrA"/>
    <property type="match status" value="1"/>
</dbReference>
<dbReference type="InterPro" id="IPR003751">
    <property type="entry name" value="CsrA"/>
</dbReference>
<dbReference type="InterPro" id="IPR036107">
    <property type="entry name" value="CsrA_sf"/>
</dbReference>
<dbReference type="NCBIfam" id="TIGR00202">
    <property type="entry name" value="csrA"/>
    <property type="match status" value="1"/>
</dbReference>
<dbReference type="NCBIfam" id="NF002469">
    <property type="entry name" value="PRK01712.1"/>
    <property type="match status" value="1"/>
</dbReference>
<dbReference type="PANTHER" id="PTHR34984">
    <property type="entry name" value="CARBON STORAGE REGULATOR"/>
    <property type="match status" value="1"/>
</dbReference>
<dbReference type="PANTHER" id="PTHR34984:SF1">
    <property type="entry name" value="CARBON STORAGE REGULATOR"/>
    <property type="match status" value="1"/>
</dbReference>
<dbReference type="Pfam" id="PF02599">
    <property type="entry name" value="CsrA"/>
    <property type="match status" value="1"/>
</dbReference>
<dbReference type="SUPFAM" id="SSF117130">
    <property type="entry name" value="CsrA-like"/>
    <property type="match status" value="1"/>
</dbReference>
<evidence type="ECO:0000255" key="1">
    <source>
        <dbReference type="HAMAP-Rule" id="MF_00167"/>
    </source>
</evidence>
<evidence type="ECO:0000256" key="2">
    <source>
        <dbReference type="SAM" id="MobiDB-lite"/>
    </source>
</evidence>
<protein>
    <recommendedName>
        <fullName evidence="1">Translational regulator CsrA</fullName>
    </recommendedName>
</protein>
<feature type="chain" id="PRO_0000177094" description="Translational regulator CsrA">
    <location>
        <begin position="1"/>
        <end position="73"/>
    </location>
</feature>
<feature type="region of interest" description="Disordered" evidence="2">
    <location>
        <begin position="54"/>
        <end position="73"/>
    </location>
</feature>
<feature type="compositionally biased region" description="Polar residues" evidence="2">
    <location>
        <begin position="61"/>
        <end position="73"/>
    </location>
</feature>